<reference key="1">
    <citation type="journal article" date="2012" name="World J. Microbiol. Biotechnol.">
        <title>Expression, purification, and characterization of alanine racemase from Pseudomonas putida YZ-26.</title>
        <authorList>
            <person name="Liu J.L."/>
            <person name="Liu X.Q."/>
            <person name="Shi Y.W."/>
        </authorList>
    </citation>
    <scope>NUCLEOTIDE SEQUENCE [GENOMIC DNA]</scope>
    <scope>FUNCTION</scope>
    <scope>CATALYTIC ACTIVITY</scope>
    <scope>COFACTOR</scope>
    <scope>ACTIVITY REGULATION</scope>
    <scope>BIOPHYSICOCHEMICAL PROPERTIES</scope>
    <scope>SUBUNIT</scope>
    <source>
        <strain>YZ-26</strain>
    </source>
</reference>
<reference evidence="9 10" key="2">
    <citation type="journal article" date="2012" name="PLoS ONE">
        <title>Crystal structures of lysine-preferred racemases, the non-antibiotic selectable markers for transgenic plants.</title>
        <authorList>
            <person name="Wu H.M."/>
            <person name="Kuan Y.C."/>
            <person name="Chu C.H."/>
            <person name="Hsu W.H."/>
            <person name="Wang W.C."/>
        </authorList>
    </citation>
    <scope>X-RAY CRYSTALLOGRAPHY (2.45 ANGSTROMS) IN COMPLEX WITH PLP</scope>
    <scope>FUNCTION</scope>
    <scope>CATALYTIC ACTIVITY</scope>
    <scope>COFACTOR</scope>
    <scope>BIOPHYSICOCHEMICAL PROPERTIES</scope>
    <scope>ACTIVE SITES</scope>
    <scope>REACTION MECHANISM</scope>
    <scope>SUBUNIT</scope>
    <scope>MUTAGENESIS OF ARG-174; ASN-175 AND ALA-393</scope>
    <scope>DISULFIDE BOND</scope>
    <source>
        <strain>DSM 84 / IMG 1513</strain>
    </source>
</reference>
<dbReference type="EC" id="5.1.1.10" evidence="2 4"/>
<dbReference type="EMBL" id="GU462155">
    <property type="protein sequence ID" value="ADW54426.1"/>
    <property type="molecule type" value="Genomic_DNA"/>
</dbReference>
<dbReference type="PDB" id="4DYJ">
    <property type="method" value="X-ray"/>
    <property type="resolution" value="2.45 A"/>
    <property type="chains" value="A/B=1-409"/>
</dbReference>
<dbReference type="PDB" id="4FS9">
    <property type="method" value="X-ray"/>
    <property type="resolution" value="3.10 A"/>
    <property type="chains" value="A/B=1-409"/>
</dbReference>
<dbReference type="PDBsum" id="4DYJ"/>
<dbReference type="PDBsum" id="4FS9"/>
<dbReference type="SMR" id="I6LNY0"/>
<dbReference type="EvolutionaryTrace" id="I6LNY0"/>
<dbReference type="GO" id="GO:0005829">
    <property type="term" value="C:cytosol"/>
    <property type="evidence" value="ECO:0007669"/>
    <property type="project" value="TreeGrafter"/>
</dbReference>
<dbReference type="GO" id="GO:0042597">
    <property type="term" value="C:periplasmic space"/>
    <property type="evidence" value="ECO:0007669"/>
    <property type="project" value="UniProtKB-SubCell"/>
</dbReference>
<dbReference type="GO" id="GO:0008784">
    <property type="term" value="F:alanine racemase activity"/>
    <property type="evidence" value="ECO:0007669"/>
    <property type="project" value="InterPro"/>
</dbReference>
<dbReference type="GO" id="GO:0047679">
    <property type="term" value="F:arginine racemase activity"/>
    <property type="evidence" value="ECO:0007669"/>
    <property type="project" value="RHEA"/>
</dbReference>
<dbReference type="GO" id="GO:0018113">
    <property type="term" value="F:lysine racemase activity"/>
    <property type="evidence" value="ECO:0007669"/>
    <property type="project" value="RHEA"/>
</dbReference>
<dbReference type="GO" id="GO:0030170">
    <property type="term" value="F:pyridoxal phosphate binding"/>
    <property type="evidence" value="ECO:0007669"/>
    <property type="project" value="UniProtKB-UniRule"/>
</dbReference>
<dbReference type="CDD" id="cd06826">
    <property type="entry name" value="PLPDE_III_AR2"/>
    <property type="match status" value="1"/>
</dbReference>
<dbReference type="Gene3D" id="3.20.20.10">
    <property type="entry name" value="Alanine racemase"/>
    <property type="match status" value="1"/>
</dbReference>
<dbReference type="Gene3D" id="2.40.37.10">
    <property type="entry name" value="Lyase, Ornithine Decarboxylase, Chain A, domain 1"/>
    <property type="match status" value="1"/>
</dbReference>
<dbReference type="HAMAP" id="MF_02212">
    <property type="entry name" value="Bsr_racemase"/>
    <property type="match status" value="1"/>
</dbReference>
<dbReference type="InterPro" id="IPR000821">
    <property type="entry name" value="Ala_racemase"/>
</dbReference>
<dbReference type="InterPro" id="IPR009006">
    <property type="entry name" value="Ala_racemase/Decarboxylase_C"/>
</dbReference>
<dbReference type="InterPro" id="IPR011079">
    <property type="entry name" value="Ala_racemase_C"/>
</dbReference>
<dbReference type="InterPro" id="IPR001608">
    <property type="entry name" value="Ala_racemase_N"/>
</dbReference>
<dbReference type="InterPro" id="IPR020622">
    <property type="entry name" value="Ala_racemase_pyridoxalP-BS"/>
</dbReference>
<dbReference type="InterPro" id="IPR029066">
    <property type="entry name" value="PLP-binding_barrel"/>
</dbReference>
<dbReference type="InterPro" id="IPR043698">
    <property type="entry name" value="Racemase_Bsr/Lyr"/>
</dbReference>
<dbReference type="NCBIfam" id="TIGR00492">
    <property type="entry name" value="alr"/>
    <property type="match status" value="1"/>
</dbReference>
<dbReference type="NCBIfam" id="NF009879">
    <property type="entry name" value="PRK13340.1-4"/>
    <property type="match status" value="1"/>
</dbReference>
<dbReference type="PANTHER" id="PTHR30511">
    <property type="entry name" value="ALANINE RACEMASE"/>
    <property type="match status" value="1"/>
</dbReference>
<dbReference type="PANTHER" id="PTHR30511:SF0">
    <property type="entry name" value="ALANINE RACEMASE, CATABOLIC-RELATED"/>
    <property type="match status" value="1"/>
</dbReference>
<dbReference type="Pfam" id="PF00842">
    <property type="entry name" value="Ala_racemase_C"/>
    <property type="match status" value="1"/>
</dbReference>
<dbReference type="Pfam" id="PF01168">
    <property type="entry name" value="Ala_racemase_N"/>
    <property type="match status" value="1"/>
</dbReference>
<dbReference type="PRINTS" id="PR00992">
    <property type="entry name" value="ALARACEMASE"/>
</dbReference>
<dbReference type="SMART" id="SM01005">
    <property type="entry name" value="Ala_racemase_C"/>
    <property type="match status" value="1"/>
</dbReference>
<dbReference type="SUPFAM" id="SSF50621">
    <property type="entry name" value="Alanine racemase C-terminal domain-like"/>
    <property type="match status" value="1"/>
</dbReference>
<dbReference type="SUPFAM" id="SSF51419">
    <property type="entry name" value="PLP-binding barrel"/>
    <property type="match status" value="1"/>
</dbReference>
<dbReference type="PROSITE" id="PS00395">
    <property type="entry name" value="ALANINE_RACEMASE"/>
    <property type="match status" value="1"/>
</dbReference>
<protein>
    <recommendedName>
        <fullName evidence="2 5">Broad specificity amino-acid racemase</fullName>
        <ecNumber evidence="2 4">5.1.1.10</ecNumber>
    </recommendedName>
</protein>
<sequence length="409" mass="44217">MPFRRTLLAASLVLLITGQAPLYAAPPLSMDNGTNALTVQNSNAWVEVSASALQHNIRTLQAELAGKSRLCAVLKADAYGHGIGLVMPSIIAQGVPCVAVASNEEARVVRASGFTGQLVRVRAASLSELEDALQYDMEELVGSAEFARQADAIAARHGKTLRIHLAFNSSGMSRNGVEMATWSGRGEALQITDQKHLELVALMTHFAVEDKDDVRKGLAAFNEQTDWLIKHARLDRSKLTLHAANSFATLEVPEARLDMVRTGGALFGDTVPGRTEYKRAMQFKSRVAAVHSYPAGNTVGYDRTFTLARDSRLANITVGYSDGYRRVFTNKGHVLINGHRVPVVGKVSMNTLMVDVTDFPDVKGGNEVVLFGKQAGGEITQAEMEEINGALLADLYTVWGSSNPKILVD</sequence>
<gene>
    <name evidence="5" type="primary">bar</name>
    <name evidence="8" type="synonym">alr</name>
</gene>
<keyword id="KW-0002">3D-structure</keyword>
<keyword id="KW-1015">Disulfide bond</keyword>
<keyword id="KW-0413">Isomerase</keyword>
<keyword id="KW-0574">Periplasm</keyword>
<keyword id="KW-0663">Pyridoxal phosphate</keyword>
<keyword id="KW-0732">Signal</keyword>
<comment type="function">
    <text evidence="3 4">Amino-acid racemase that catalyzes the interconversion of L-lysine and D-lysine, and L-arginine and D-arginine (PubMed:23118975). To a lesser extent, is also able to interconvert alanine and isoleucine enantiomers (PubMed:22806802, PubMed:23118975).</text>
</comment>
<comment type="catalytic activity">
    <reaction evidence="2 4">
        <text>an L-alpha-amino acid = a D-alpha-amino acid</text>
        <dbReference type="Rhea" id="RHEA:18317"/>
        <dbReference type="ChEBI" id="CHEBI:59869"/>
        <dbReference type="ChEBI" id="CHEBI:59871"/>
        <dbReference type="EC" id="5.1.1.10"/>
    </reaction>
</comment>
<comment type="catalytic activity">
    <reaction evidence="2 4">
        <text>L-lysine = D-lysine</text>
        <dbReference type="Rhea" id="RHEA:22864"/>
        <dbReference type="ChEBI" id="CHEBI:32551"/>
        <dbReference type="ChEBI" id="CHEBI:32557"/>
    </reaction>
</comment>
<comment type="catalytic activity">
    <reaction evidence="2 4">
        <text>L-arginine = D-arginine</text>
        <dbReference type="Rhea" id="RHEA:18069"/>
        <dbReference type="ChEBI" id="CHEBI:32682"/>
        <dbReference type="ChEBI" id="CHEBI:32689"/>
    </reaction>
</comment>
<comment type="catalytic activity">
    <reaction evidence="3 4">
        <text>L-alanine = D-alanine</text>
        <dbReference type="Rhea" id="RHEA:20249"/>
        <dbReference type="ChEBI" id="CHEBI:57416"/>
        <dbReference type="ChEBI" id="CHEBI:57972"/>
    </reaction>
</comment>
<comment type="cofactor">
    <cofactor evidence="2 3 4">
        <name>pyridoxal 5'-phosphate</name>
        <dbReference type="ChEBI" id="CHEBI:597326"/>
    </cofactor>
</comment>
<comment type="activity regulation">
    <text evidence="3">Activity is enhanced by Co(2+), Mn(2+) and Sr(2+), and decreased by Cu(2+).</text>
</comment>
<comment type="biophysicochemical properties">
    <kinetics>
        <KM evidence="3">10.34 mM for L-alanine</KM>
        <KM evidence="4">25.4 mM for L-lysine</KM>
        <KM evidence="4">14.5 mM for L-arginine</KM>
        <Vmax evidence="3">18.73 mmol/min/mg enzyme with L-alanine as substrate</Vmax>
        <text evidence="3 4">kcat is 4238 min(-1) with L-alanine as substrate (PubMed:22806802). kcat is 3545 min(-1) with L-lysine as substrate. kcat is 2228 min(-1) with L-arginine as substrate (PubMed:23118975).</text>
    </kinetics>
    <phDependence>
        <text evidence="3">Optimum pH is 9.0.</text>
    </phDependence>
    <temperatureDependence>
        <text evidence="3">Optimum temperature is 37 degrees Celsius.</text>
    </temperatureDependence>
</comment>
<comment type="subunit">
    <text evidence="3 4">Monomer (PubMed:22806802). Forms a head-to-tail homodimer in the structure (PubMed:23118975).</text>
</comment>
<comment type="subcellular location">
    <subcellularLocation>
        <location evidence="1 2">Periplasm</location>
    </subcellularLocation>
</comment>
<comment type="miscellaneous">
    <text evidence="7">The active-site cleft is located at the dimeric interface and contains the two conserved catalytic residues, a lysine from one subunit and a tyrosine from the other subunit.</text>
</comment>
<comment type="similarity">
    <text evidence="2 6">Belongs to the alanine racemase family. Bsr subfamily.</text>
</comment>
<organism>
    <name type="scientific">Pseudomonas putida</name>
    <name type="common">Arthrobacter siderocapsulatus</name>
    <dbReference type="NCBI Taxonomy" id="303"/>
    <lineage>
        <taxon>Bacteria</taxon>
        <taxon>Pseudomonadati</taxon>
        <taxon>Pseudomonadota</taxon>
        <taxon>Gammaproteobacteria</taxon>
        <taxon>Pseudomonadales</taxon>
        <taxon>Pseudomonadaceae</taxon>
        <taxon>Pseudomonas</taxon>
    </lineage>
</organism>
<proteinExistence type="evidence at protein level"/>
<accession>I6LNY0</accession>
<feature type="signal peptide" evidence="2">
    <location>
        <begin position="1"/>
        <end position="24"/>
    </location>
</feature>
<feature type="chain" id="PRO_0000422273" description="Broad specificity amino-acid racemase" evidence="2">
    <location>
        <begin position="25"/>
        <end position="409"/>
    </location>
</feature>
<feature type="active site" description="Proton acceptor" evidence="2 7">
    <location>
        <position position="75"/>
    </location>
</feature>
<feature type="active site" description="Proton acceptor" evidence="2 7">
    <location>
        <position position="301"/>
    </location>
</feature>
<feature type="binding site" evidence="2">
    <location>
        <position position="174"/>
    </location>
    <ligand>
        <name>substrate</name>
    </ligand>
</feature>
<feature type="binding site" evidence="2">
    <location>
        <position position="349"/>
    </location>
    <ligand>
        <name>substrate</name>
    </ligand>
</feature>
<feature type="modified residue" description="N6-(pyridoxal phosphate)lysine" evidence="2 4">
    <location>
        <position position="75"/>
    </location>
</feature>
<feature type="disulfide bond" evidence="2 4">
    <location>
        <begin position="71"/>
        <end position="97"/>
    </location>
</feature>
<feature type="mutagenesis site" description="Loss of catalytic activity." evidence="4">
    <original>R</original>
    <variation>A</variation>
    <variation>K</variation>
    <location>
        <position position="174"/>
    </location>
</feature>
<feature type="mutagenesis site" description="Loss of catalytic activity." evidence="4">
    <original>N</original>
    <variation>L</variation>
    <location>
        <position position="175"/>
    </location>
</feature>
<feature type="mutagenesis site" description="Reduces the catalytic activity towards L-Lys by 2-fold. Loss of racemase activity towards L-Arg." evidence="4">
    <original>A</original>
    <variation>Y</variation>
    <location>
        <position position="393"/>
    </location>
</feature>
<feature type="strand" evidence="12">
    <location>
        <begin position="28"/>
        <end position="31"/>
    </location>
</feature>
<feature type="helix" evidence="11">
    <location>
        <begin position="39"/>
        <end position="41"/>
    </location>
</feature>
<feature type="strand" evidence="11">
    <location>
        <begin position="43"/>
        <end position="49"/>
    </location>
</feature>
<feature type="helix" evidence="11">
    <location>
        <begin position="50"/>
        <end position="64"/>
    </location>
</feature>
<feature type="strand" evidence="11">
    <location>
        <begin position="67"/>
        <end position="73"/>
    </location>
</feature>
<feature type="helix" evidence="11">
    <location>
        <begin position="78"/>
        <end position="80"/>
    </location>
</feature>
<feature type="helix" evidence="11">
    <location>
        <begin position="83"/>
        <end position="92"/>
    </location>
</feature>
<feature type="strand" evidence="11">
    <location>
        <begin position="97"/>
        <end position="102"/>
    </location>
</feature>
<feature type="helix" evidence="11">
    <location>
        <begin position="103"/>
        <end position="111"/>
    </location>
</feature>
<feature type="strand" evidence="11">
    <location>
        <begin position="116"/>
        <end position="122"/>
    </location>
</feature>
<feature type="helix" evidence="11">
    <location>
        <begin position="126"/>
        <end position="131"/>
    </location>
</feature>
<feature type="helix" evidence="11">
    <location>
        <begin position="132"/>
        <end position="135"/>
    </location>
</feature>
<feature type="strand" evidence="11">
    <location>
        <begin position="138"/>
        <end position="141"/>
    </location>
</feature>
<feature type="helix" evidence="11">
    <location>
        <begin position="144"/>
        <end position="156"/>
    </location>
</feature>
<feature type="strand" evidence="11">
    <location>
        <begin position="161"/>
        <end position="167"/>
    </location>
</feature>
<feature type="strand" evidence="11">
    <location>
        <begin position="174"/>
        <end position="177"/>
    </location>
</feature>
<feature type="helix" evidence="11">
    <location>
        <begin position="182"/>
        <end position="192"/>
    </location>
</feature>
<feature type="strand" evidence="11">
    <location>
        <begin position="197"/>
        <end position="203"/>
    </location>
</feature>
<feature type="helix" evidence="11">
    <location>
        <begin position="211"/>
        <end position="231"/>
    </location>
</feature>
<feature type="helix" evidence="11">
    <location>
        <begin position="236"/>
        <end position="238"/>
    </location>
</feature>
<feature type="strand" evidence="11">
    <location>
        <begin position="240"/>
        <end position="242"/>
    </location>
</feature>
<feature type="helix" evidence="11">
    <location>
        <begin position="246"/>
        <end position="251"/>
    </location>
</feature>
<feature type="helix" evidence="11">
    <location>
        <begin position="253"/>
        <end position="256"/>
    </location>
</feature>
<feature type="strand" evidence="11">
    <location>
        <begin position="258"/>
        <end position="263"/>
    </location>
</feature>
<feature type="helix" evidence="11">
    <location>
        <begin position="264"/>
        <end position="266"/>
    </location>
</feature>
<feature type="strand" evidence="11">
    <location>
        <begin position="281"/>
        <end position="293"/>
    </location>
</feature>
<feature type="strand" evidence="12">
    <location>
        <begin position="298"/>
        <end position="300"/>
    </location>
</feature>
<feature type="helix" evidence="11">
    <location>
        <begin position="301"/>
        <end position="303"/>
    </location>
</feature>
<feature type="strand" evidence="11">
    <location>
        <begin position="308"/>
        <end position="317"/>
    </location>
</feature>
<feature type="helix" evidence="11">
    <location>
        <begin position="320"/>
        <end position="322"/>
    </location>
</feature>
<feature type="helix" evidence="11">
    <location>
        <begin position="326"/>
        <end position="328"/>
    </location>
</feature>
<feature type="turn" evidence="11">
    <location>
        <begin position="329"/>
        <end position="331"/>
    </location>
</feature>
<feature type="strand" evidence="11">
    <location>
        <begin position="333"/>
        <end position="336"/>
    </location>
</feature>
<feature type="strand" evidence="11">
    <location>
        <begin position="339"/>
        <end position="343"/>
    </location>
</feature>
<feature type="strand" evidence="11">
    <location>
        <begin position="352"/>
        <end position="355"/>
    </location>
</feature>
<feature type="strand" evidence="11">
    <location>
        <begin position="367"/>
        <end position="374"/>
    </location>
</feature>
<feature type="strand" evidence="11">
    <location>
        <begin position="377"/>
        <end position="379"/>
    </location>
</feature>
<feature type="helix" evidence="11">
    <location>
        <begin position="381"/>
        <end position="388"/>
    </location>
</feature>
<feature type="helix" evidence="11">
    <location>
        <begin position="393"/>
        <end position="402"/>
    </location>
</feature>
<feature type="strand" evidence="11">
    <location>
        <begin position="405"/>
        <end position="408"/>
    </location>
</feature>
<name>BSR_PSEPU</name>
<evidence type="ECO:0000250" key="1">
    <source>
        <dbReference type="UniProtKB" id="Q88GJ9"/>
    </source>
</evidence>
<evidence type="ECO:0000255" key="2">
    <source>
        <dbReference type="HAMAP-Rule" id="MF_02212"/>
    </source>
</evidence>
<evidence type="ECO:0000269" key="3">
    <source>
    </source>
</evidence>
<evidence type="ECO:0000269" key="4">
    <source>
    </source>
</evidence>
<evidence type="ECO:0000303" key="5">
    <source>
    </source>
</evidence>
<evidence type="ECO:0000305" key="6"/>
<evidence type="ECO:0000305" key="7">
    <source>
    </source>
</evidence>
<evidence type="ECO:0000312" key="8">
    <source>
        <dbReference type="EMBL" id="ADW54426.1"/>
    </source>
</evidence>
<evidence type="ECO:0007744" key="9">
    <source>
        <dbReference type="PDB" id="4DYJ"/>
    </source>
</evidence>
<evidence type="ECO:0007744" key="10">
    <source>
        <dbReference type="PDB" id="4FS9"/>
    </source>
</evidence>
<evidence type="ECO:0007829" key="11">
    <source>
        <dbReference type="PDB" id="4DYJ"/>
    </source>
</evidence>
<evidence type="ECO:0007829" key="12">
    <source>
        <dbReference type="PDB" id="4FS9"/>
    </source>
</evidence>